<reference key="1">
    <citation type="journal article" date="2005" name="Nature">
        <title>The genome of the social amoeba Dictyostelium discoideum.</title>
        <authorList>
            <person name="Eichinger L."/>
            <person name="Pachebat J.A."/>
            <person name="Gloeckner G."/>
            <person name="Rajandream M.A."/>
            <person name="Sucgang R."/>
            <person name="Berriman M."/>
            <person name="Song J."/>
            <person name="Olsen R."/>
            <person name="Szafranski K."/>
            <person name="Xu Q."/>
            <person name="Tunggal B."/>
            <person name="Kummerfeld S."/>
            <person name="Madera M."/>
            <person name="Konfortov B.A."/>
            <person name="Rivero F."/>
            <person name="Bankier A.T."/>
            <person name="Lehmann R."/>
            <person name="Hamlin N."/>
            <person name="Davies R."/>
            <person name="Gaudet P."/>
            <person name="Fey P."/>
            <person name="Pilcher K."/>
            <person name="Chen G."/>
            <person name="Saunders D."/>
            <person name="Sodergren E.J."/>
            <person name="Davis P."/>
            <person name="Kerhornou A."/>
            <person name="Nie X."/>
            <person name="Hall N."/>
            <person name="Anjard C."/>
            <person name="Hemphill L."/>
            <person name="Bason N."/>
            <person name="Farbrother P."/>
            <person name="Desany B."/>
            <person name="Just E."/>
            <person name="Morio T."/>
            <person name="Rost R."/>
            <person name="Churcher C.M."/>
            <person name="Cooper J."/>
            <person name="Haydock S."/>
            <person name="van Driessche N."/>
            <person name="Cronin A."/>
            <person name="Goodhead I."/>
            <person name="Muzny D.M."/>
            <person name="Mourier T."/>
            <person name="Pain A."/>
            <person name="Lu M."/>
            <person name="Harper D."/>
            <person name="Lindsay R."/>
            <person name="Hauser H."/>
            <person name="James K.D."/>
            <person name="Quiles M."/>
            <person name="Madan Babu M."/>
            <person name="Saito T."/>
            <person name="Buchrieser C."/>
            <person name="Wardroper A."/>
            <person name="Felder M."/>
            <person name="Thangavelu M."/>
            <person name="Johnson D."/>
            <person name="Knights A."/>
            <person name="Loulseged H."/>
            <person name="Mungall K.L."/>
            <person name="Oliver K."/>
            <person name="Price C."/>
            <person name="Quail M.A."/>
            <person name="Urushihara H."/>
            <person name="Hernandez J."/>
            <person name="Rabbinowitsch E."/>
            <person name="Steffen D."/>
            <person name="Sanders M."/>
            <person name="Ma J."/>
            <person name="Kohara Y."/>
            <person name="Sharp S."/>
            <person name="Simmonds M.N."/>
            <person name="Spiegler S."/>
            <person name="Tivey A."/>
            <person name="Sugano S."/>
            <person name="White B."/>
            <person name="Walker D."/>
            <person name="Woodward J.R."/>
            <person name="Winckler T."/>
            <person name="Tanaka Y."/>
            <person name="Shaulsky G."/>
            <person name="Schleicher M."/>
            <person name="Weinstock G.M."/>
            <person name="Rosenthal A."/>
            <person name="Cox E.C."/>
            <person name="Chisholm R.L."/>
            <person name="Gibbs R.A."/>
            <person name="Loomis W.F."/>
            <person name="Platzer M."/>
            <person name="Kay R.R."/>
            <person name="Williams J.G."/>
            <person name="Dear P.H."/>
            <person name="Noegel A.A."/>
            <person name="Barrell B.G."/>
            <person name="Kuspa A."/>
        </authorList>
    </citation>
    <scope>NUCLEOTIDE SEQUENCE [LARGE SCALE GENOMIC DNA]</scope>
    <source>
        <strain>AX4</strain>
    </source>
</reference>
<reference key="2">
    <citation type="submission" date="2009-07" db="UniProtKB">
        <authorList>
            <person name="Bienvenut W.V."/>
            <person name="Ura S."/>
            <person name="Insall R.H."/>
        </authorList>
    </citation>
    <scope>PROTEIN SEQUENCE OF 40-54; 445-468 AND 1050-1060</scope>
    <scope>IDENTIFICATION BY MASS SPECTROMETRY</scope>
    <source>
        <strain>AX2</strain>
    </source>
</reference>
<gene>
    <name type="ORF">DDB_G0291301</name>
</gene>
<proteinExistence type="evidence at protein level"/>
<accession>Q54EW2</accession>
<protein>
    <recommendedName>
        <fullName>Putative bifunctional amine oxidase DDB_G0291301</fullName>
    </recommendedName>
    <domain>
        <recommendedName>
            <fullName>Putative sarcosine oxidase</fullName>
            <shortName>PSO</shortName>
            <ecNumber>1.5.3.1</ecNumber>
            <ecNumber>1.5.3.7</ecNumber>
        </recommendedName>
    </domain>
    <domain>
        <recommendedName>
            <fullName>Putative L-amino-acid oxidase</fullName>
            <ecNumber>1.4.3.2</ecNumber>
        </recommendedName>
    </domain>
</protein>
<organism>
    <name type="scientific">Dictyostelium discoideum</name>
    <name type="common">Social amoeba</name>
    <dbReference type="NCBI Taxonomy" id="44689"/>
    <lineage>
        <taxon>Eukaryota</taxon>
        <taxon>Amoebozoa</taxon>
        <taxon>Evosea</taxon>
        <taxon>Eumycetozoa</taxon>
        <taxon>Dictyostelia</taxon>
        <taxon>Dictyosteliales</taxon>
        <taxon>Dictyosteliaceae</taxon>
        <taxon>Dictyostelium</taxon>
    </lineage>
</organism>
<dbReference type="EC" id="1.5.3.1"/>
<dbReference type="EC" id="1.5.3.7"/>
<dbReference type="EC" id="1.4.3.2"/>
<dbReference type="EMBL" id="AAFI02000177">
    <property type="protein sequence ID" value="EAL61634.1"/>
    <property type="molecule type" value="Genomic_DNA"/>
</dbReference>
<dbReference type="RefSeq" id="XP_635128.1">
    <property type="nucleotide sequence ID" value="XM_630036.1"/>
</dbReference>
<dbReference type="SMR" id="Q54EW2"/>
<dbReference type="BioGRID" id="1253077">
    <property type="interactions" value="1"/>
</dbReference>
<dbReference type="FunCoup" id="Q54EW2">
    <property type="interactions" value="3"/>
</dbReference>
<dbReference type="STRING" id="44689.Q54EW2"/>
<dbReference type="PaxDb" id="44689-DDB0235252"/>
<dbReference type="EnsemblProtists" id="EAL61634">
    <property type="protein sequence ID" value="EAL61634"/>
    <property type="gene ID" value="DDB_G0291301"/>
</dbReference>
<dbReference type="GeneID" id="8628074"/>
<dbReference type="KEGG" id="ddi:DDB_G0291301"/>
<dbReference type="dictyBase" id="DDB_G0291301"/>
<dbReference type="VEuPathDB" id="AmoebaDB:DDB_G0291301"/>
<dbReference type="eggNOG" id="KOG2820">
    <property type="taxonomic scope" value="Eukaryota"/>
</dbReference>
<dbReference type="HOGENOM" id="CLU_286277_0_0_1"/>
<dbReference type="InParanoid" id="Q54EW2"/>
<dbReference type="OMA" id="LRTMYTE"/>
<dbReference type="PhylomeDB" id="Q54EW2"/>
<dbReference type="Reactome" id="R-DDI-8964208">
    <property type="pathway name" value="Phenylalanine metabolism"/>
</dbReference>
<dbReference type="PRO" id="PR:Q54EW2"/>
<dbReference type="Proteomes" id="UP000002195">
    <property type="component" value="Chromosome 6"/>
</dbReference>
<dbReference type="GO" id="GO:0016020">
    <property type="term" value="C:membrane"/>
    <property type="evidence" value="ECO:0007669"/>
    <property type="project" value="UniProtKB-SubCell"/>
</dbReference>
<dbReference type="GO" id="GO:0001716">
    <property type="term" value="F:L-amino-acid oxidase activity"/>
    <property type="evidence" value="ECO:0000318"/>
    <property type="project" value="GO_Central"/>
</dbReference>
<dbReference type="GO" id="GO:0050031">
    <property type="term" value="F:L-pipecolate oxidase activity"/>
    <property type="evidence" value="ECO:0007669"/>
    <property type="project" value="UniProtKB-EC"/>
</dbReference>
<dbReference type="GO" id="GO:0008115">
    <property type="term" value="F:sarcosine oxidase activity"/>
    <property type="evidence" value="ECO:0007669"/>
    <property type="project" value="UniProtKB-EC"/>
</dbReference>
<dbReference type="GO" id="GO:0009063">
    <property type="term" value="P:amino acid catabolic process"/>
    <property type="evidence" value="ECO:0000318"/>
    <property type="project" value="GO_Central"/>
</dbReference>
<dbReference type="FunFam" id="3.90.660.10:FF:000042">
    <property type="entry name" value="Putative bifunctional amine oxidase DDB_G0291301"/>
    <property type="match status" value="1"/>
</dbReference>
<dbReference type="Gene3D" id="1.10.10.1620">
    <property type="match status" value="1"/>
</dbReference>
<dbReference type="Gene3D" id="3.90.660.10">
    <property type="match status" value="1"/>
</dbReference>
<dbReference type="Gene3D" id="3.30.9.10">
    <property type="entry name" value="D-Amino Acid Oxidase, subunit A, domain 2"/>
    <property type="match status" value="1"/>
</dbReference>
<dbReference type="Gene3D" id="3.50.50.60">
    <property type="entry name" value="FAD/NAD(P)-binding domain"/>
    <property type="match status" value="2"/>
</dbReference>
<dbReference type="Gene3D" id="1.10.405.10">
    <property type="entry name" value="Guanine Nucleotide Dissociation Inhibitor, domain 1"/>
    <property type="match status" value="1"/>
</dbReference>
<dbReference type="InterPro" id="IPR002937">
    <property type="entry name" value="Amino_oxidase"/>
</dbReference>
<dbReference type="InterPro" id="IPR006076">
    <property type="entry name" value="FAD-dep_OxRdtase"/>
</dbReference>
<dbReference type="InterPro" id="IPR036188">
    <property type="entry name" value="FAD/NAD-bd_sf"/>
</dbReference>
<dbReference type="InterPro" id="IPR050281">
    <property type="entry name" value="Flavin_monoamine_oxidase"/>
</dbReference>
<dbReference type="PANTHER" id="PTHR10742:SF342">
    <property type="entry name" value="AMINE OXIDASE"/>
    <property type="match status" value="1"/>
</dbReference>
<dbReference type="PANTHER" id="PTHR10742">
    <property type="entry name" value="FLAVIN MONOAMINE OXIDASE"/>
    <property type="match status" value="1"/>
</dbReference>
<dbReference type="Pfam" id="PF01593">
    <property type="entry name" value="Amino_oxidase"/>
    <property type="match status" value="1"/>
</dbReference>
<dbReference type="Pfam" id="PF01266">
    <property type="entry name" value="DAO"/>
    <property type="match status" value="1"/>
</dbReference>
<dbReference type="PRINTS" id="PR00411">
    <property type="entry name" value="PNDRDTASEI"/>
</dbReference>
<dbReference type="SUPFAM" id="SSF54373">
    <property type="entry name" value="FAD-linked reductases, C-terminal domain"/>
    <property type="match status" value="1"/>
</dbReference>
<dbReference type="SUPFAM" id="SSF51905">
    <property type="entry name" value="FAD/NAD(P)-binding domain"/>
    <property type="match status" value="2"/>
</dbReference>
<name>Y9130_DICDI</name>
<keyword id="KW-0903">Direct protein sequencing</keyword>
<keyword id="KW-0274">FAD</keyword>
<keyword id="KW-0285">Flavoprotein</keyword>
<keyword id="KW-0472">Membrane</keyword>
<keyword id="KW-0511">Multifunctional enzyme</keyword>
<keyword id="KW-0560">Oxidoreductase</keyword>
<keyword id="KW-1185">Reference proteome</keyword>
<keyword id="KW-0812">Transmembrane</keyword>
<keyword id="KW-1133">Transmembrane helix</keyword>
<sequence length="1080" mass="120674">MREFLKDDYDVIVCGGGPVGLATAYRCAKAGKKVLCLEKSVFFNGGGSSGDVVRMLRTMYTEDYMADLAHETLGLWKELGDDAGEGDLVWMTGLLNFGDPNYGAGGPEGTLLGPIPNLERLGMQYKVLTAQEIMEEYPFRNIPSNHQGVFAPDNGVINLPLVLRSLYKLCLQYGCKMVSHAEVKLIKNLSTTMVEIEVEHTDVDQKNKQSFKVKSKKAAITSNSFCNHIIKPSFGWELDMTIWEMTSSYFVAKPGPNATVFKSMWFNFQNDTDNDPTKSNLYYGFPAVPWMTDNHCRIALDAALRQIKDPNDRHDGVETHDVNRTRDWVREHIPGVDDTPLFNVSALMANVYDNMFVLDFIPETNNNVVMFACGWAMKFIPLLGKILSQLLDEGKTQYPIDHFALNRGNGALIIKEGQTPKSVNSQVRAPRYTSMHCKPLTIAKSTVPTNQSSNPDGASSTAPTQSLRSLFASRLLQRSVGMEAKFHSIIAKNRSKRSTKASQKDLTVGIIGAGMAGLYAAMILQDLGLQYNILEANKERVGGRIYTYRFPQNQDKYQTVELGAMRFPKIEIMDRLLNLDKPWSLFSKLEKAGHKIPTIPYHLTVDNNLVYYNGKRIFANTLLNDDPLYFSDTHNGGPGTAVPDKYTYQPYGDLLDAVYKKFSDDLENDFESGFETLLKSDNYSTRAYLFEKGPYPQSVVNYLETMDTGTGLYDMAFSETIMDYFDFSAGDEWLCIDGGTDIIVNSMVKTLRPGCIEQGKVVTKVSRVVGKSGDVSNLKVDFLDGTEGRLFKHVISTGTLASLRRVDLSDLKLSHNKRTAIRSLHYDHSVKIALSFKSRWWEDSKFMNGKPMLGGKSSTDLPVRTIVYPSYGIGQPGVSGVLIVSYTWSLDASRIGSLVGDRPSEEVLIKLCMANLAEVHNVPVATLQQLFVDYKCWDWYNDDYSSGAFALYSPSQFSQLFPSLTKPSPDGRFHLAGEATSVHHGWVIGSLNSAYRSVDHILQVEGLDELRAKLRLNWGFIDEVEDPQDDQQYVDPHHNLSGPNAKKFRSNVSQVAIQPRFKAPRNFKPRNTAASIGGLK</sequence>
<comment type="function">
    <text evidence="1">Catalyzes an oxidative deamination of predominantly hydrophobic and aromatic L-amino acids. Metabolizes sarcosine, L-pipecolic acid and L-proline (By similarity).</text>
</comment>
<comment type="catalytic activity">
    <reaction>
        <text>sarcosine + O2 + H2O = formaldehyde + glycine + H2O2</text>
        <dbReference type="Rhea" id="RHEA:13313"/>
        <dbReference type="ChEBI" id="CHEBI:15377"/>
        <dbReference type="ChEBI" id="CHEBI:15379"/>
        <dbReference type="ChEBI" id="CHEBI:16240"/>
        <dbReference type="ChEBI" id="CHEBI:16842"/>
        <dbReference type="ChEBI" id="CHEBI:57305"/>
        <dbReference type="ChEBI" id="CHEBI:57433"/>
        <dbReference type="EC" id="1.5.3.1"/>
    </reaction>
</comment>
<comment type="catalytic activity">
    <reaction>
        <text>L-pipecolate + O2 = L-1-piperideine-6-carboxylate + H2O2 + H(+)</text>
        <dbReference type="Rhea" id="RHEA:11992"/>
        <dbReference type="ChEBI" id="CHEBI:15378"/>
        <dbReference type="ChEBI" id="CHEBI:15379"/>
        <dbReference type="ChEBI" id="CHEBI:16240"/>
        <dbReference type="ChEBI" id="CHEBI:58769"/>
        <dbReference type="ChEBI" id="CHEBI:61185"/>
        <dbReference type="EC" id="1.5.3.7"/>
    </reaction>
</comment>
<comment type="catalytic activity">
    <reaction>
        <text>an L-alpha-amino acid + O2 + H2O = a 2-oxocarboxylate + H2O2 + NH4(+)</text>
        <dbReference type="Rhea" id="RHEA:13781"/>
        <dbReference type="ChEBI" id="CHEBI:15377"/>
        <dbReference type="ChEBI" id="CHEBI:15379"/>
        <dbReference type="ChEBI" id="CHEBI:16240"/>
        <dbReference type="ChEBI" id="CHEBI:28938"/>
        <dbReference type="ChEBI" id="CHEBI:35179"/>
        <dbReference type="ChEBI" id="CHEBI:59869"/>
        <dbReference type="EC" id="1.4.3.2"/>
    </reaction>
</comment>
<comment type="cofactor">
    <cofactor evidence="1">
        <name>FAD</name>
        <dbReference type="ChEBI" id="CHEBI:57692"/>
    </cofactor>
</comment>
<comment type="subcellular location">
    <subcellularLocation>
        <location evidence="4">Membrane</location>
        <topology evidence="4">Single-pass membrane protein</topology>
    </subcellularLocation>
</comment>
<comment type="similarity">
    <text evidence="4">In the N-terminal section; belongs to the MSOX/MTOX family.</text>
</comment>
<comment type="similarity">
    <text evidence="4">In the C-terminal section; belongs to the flavin monoamine oxidase family.</text>
</comment>
<evidence type="ECO:0000250" key="1"/>
<evidence type="ECO:0000255" key="2"/>
<evidence type="ECO:0000256" key="3">
    <source>
        <dbReference type="SAM" id="MobiDB-lite"/>
    </source>
</evidence>
<evidence type="ECO:0000305" key="4"/>
<feature type="chain" id="PRO_0000388375" description="Putative bifunctional amine oxidase DDB_G0291301">
    <location>
        <begin position="1"/>
        <end position="1080"/>
    </location>
</feature>
<feature type="transmembrane region" description="Helical" evidence="2">
    <location>
        <begin position="508"/>
        <end position="528"/>
    </location>
</feature>
<feature type="region of interest" description="Putative sarcosine oxidase">
    <location>
        <begin position="1"/>
        <end position="450" status="uncertain"/>
    </location>
</feature>
<feature type="region of interest" description="Disordered" evidence="3">
    <location>
        <begin position="445"/>
        <end position="464"/>
    </location>
</feature>
<feature type="region of interest" description="Putative L-amino-acid oxidase">
    <location>
        <begin position="450" status="uncertain"/>
        <end position="1080"/>
    </location>
</feature>
<feature type="binding site" evidence="2">
    <location>
        <begin position="10"/>
        <end position="40"/>
    </location>
    <ligand>
        <name>FAD</name>
        <dbReference type="ChEBI" id="CHEBI:57692"/>
    </ligand>
</feature>
<feature type="binding site" evidence="1">
    <location>
        <position position="535"/>
    </location>
    <ligand>
        <name>FAD</name>
        <dbReference type="ChEBI" id="CHEBI:57692"/>
    </ligand>
</feature>
<feature type="binding site" evidence="1">
    <location>
        <position position="544"/>
    </location>
    <ligand>
        <name>FAD</name>
        <dbReference type="ChEBI" id="CHEBI:57692"/>
    </ligand>
</feature>
<feature type="binding site" evidence="1">
    <location>
        <begin position="563"/>
        <end position="564"/>
    </location>
    <ligand>
        <name>FAD</name>
        <dbReference type="ChEBI" id="CHEBI:57692"/>
    </ligand>
</feature>
<feature type="binding site" evidence="1">
    <location>
        <position position="886"/>
    </location>
    <ligand>
        <name>substrate</name>
    </ligand>
</feature>
<feature type="binding site" evidence="1">
    <location>
        <position position="978"/>
    </location>
    <ligand>
        <name>FAD</name>
        <dbReference type="ChEBI" id="CHEBI:57692"/>
    </ligand>
</feature>
<feature type="binding site" evidence="1">
    <location>
        <begin position="987"/>
        <end position="990"/>
    </location>
    <ligand>
        <name>FAD</name>
        <dbReference type="ChEBI" id="CHEBI:57692"/>
    </ligand>
</feature>